<keyword id="KW-0472">Membrane</keyword>
<keyword id="KW-0496">Mitochondrion</keyword>
<keyword id="KW-0999">Mitochondrion inner membrane</keyword>
<keyword id="KW-1278">Translocase</keyword>
<keyword id="KW-0812">Transmembrane</keyword>
<keyword id="KW-1133">Transmembrane helix</keyword>
<name>COX3_GAZSU</name>
<organism>
    <name type="scientific">Gazella subgutturosa</name>
    <name type="common">Goitred gazelle</name>
    <dbReference type="NCBI Taxonomy" id="59529"/>
    <lineage>
        <taxon>Eukaryota</taxon>
        <taxon>Metazoa</taxon>
        <taxon>Chordata</taxon>
        <taxon>Craniata</taxon>
        <taxon>Vertebrata</taxon>
        <taxon>Euteleostomi</taxon>
        <taxon>Mammalia</taxon>
        <taxon>Eutheria</taxon>
        <taxon>Laurasiatheria</taxon>
        <taxon>Artiodactyla</taxon>
        <taxon>Ruminantia</taxon>
        <taxon>Pecora</taxon>
        <taxon>Bovidae</taxon>
        <taxon>Antilopinae</taxon>
        <taxon>Gazella</taxon>
    </lineage>
</organism>
<geneLocation type="mitochondrion"/>
<evidence type="ECO:0000250" key="1">
    <source>
        <dbReference type="UniProtKB" id="P00415"/>
    </source>
</evidence>
<evidence type="ECO:0000250" key="2">
    <source>
        <dbReference type="UniProtKB" id="P00420"/>
    </source>
</evidence>
<evidence type="ECO:0000305" key="3"/>
<gene>
    <name type="primary">MT-CO3</name>
    <name type="synonym">COIII</name>
    <name type="synonym">COXIII</name>
    <name type="synonym">MTCO3</name>
</gene>
<feature type="chain" id="PRO_0000183786" description="Cytochrome c oxidase subunit 3">
    <location>
        <begin position="1"/>
        <end position="261"/>
    </location>
</feature>
<feature type="topological domain" description="Mitochondrial matrix" evidence="1">
    <location>
        <begin position="1"/>
        <end position="15"/>
    </location>
</feature>
<feature type="transmembrane region" description="Helical; Name=I" evidence="1">
    <location>
        <begin position="16"/>
        <end position="34"/>
    </location>
</feature>
<feature type="topological domain" description="Mitochondrial intermembrane" evidence="1">
    <location>
        <begin position="35"/>
        <end position="40"/>
    </location>
</feature>
<feature type="transmembrane region" description="Helical; Name=II" evidence="1">
    <location>
        <begin position="41"/>
        <end position="66"/>
    </location>
</feature>
<feature type="topological domain" description="Mitochondrial matrix" evidence="1">
    <location>
        <begin position="67"/>
        <end position="72"/>
    </location>
</feature>
<feature type="transmembrane region" description="Helical; Name=III" evidence="1">
    <location>
        <begin position="73"/>
        <end position="105"/>
    </location>
</feature>
<feature type="topological domain" description="Mitochondrial intermembrane" evidence="1">
    <location>
        <begin position="106"/>
        <end position="128"/>
    </location>
</feature>
<feature type="transmembrane region" description="Helical; Name=IV" evidence="1">
    <location>
        <begin position="129"/>
        <end position="152"/>
    </location>
</feature>
<feature type="topological domain" description="Mitochondrial matrix" evidence="1">
    <location>
        <begin position="153"/>
        <end position="155"/>
    </location>
</feature>
<feature type="transmembrane region" description="Helical; Name=V" evidence="1">
    <location>
        <begin position="156"/>
        <end position="183"/>
    </location>
</feature>
<feature type="topological domain" description="Mitochondrial intermembrane" evidence="1">
    <location>
        <begin position="184"/>
        <end position="190"/>
    </location>
</feature>
<feature type="transmembrane region" description="Helical; Name=VI" evidence="1">
    <location>
        <begin position="191"/>
        <end position="223"/>
    </location>
</feature>
<feature type="topological domain" description="Mitochondrial matrix" evidence="1">
    <location>
        <begin position="224"/>
        <end position="232"/>
    </location>
</feature>
<feature type="transmembrane region" description="Helical; Name=VII" evidence="1">
    <location>
        <begin position="233"/>
        <end position="256"/>
    </location>
</feature>
<feature type="topological domain" description="Mitochondrial intermembrane" evidence="1">
    <location>
        <begin position="257"/>
        <end position="261"/>
    </location>
</feature>
<sequence>MTHQTHAYHMVNPSPWPLTGALSALLMTSGLIMWFHFNSTTLLMLGLTTNMLTMYQWWRDVIRESTFQGHHTPNVQKGLRYGMILFIISEVLFFTGFFWAFYHSSLAPTPELGGCWPPTGINPLNPLEVPLLNTSVLLASGVSITWAHHSLMEGNRNHMLQALFITIALGVYFTLLQASEYYEAPFTISDGVYGSTFFVATGFHGLHVIIGSTFLIVCFFRQLKFHFTSNHHFGFEAAAWYWHFVDVVWLFLYVSIYWWGS</sequence>
<reference key="1">
    <citation type="journal article" date="1999" name="Mol. Phylogenet. Evol.">
        <title>Phylogenetic relationships in the bovid subfamily Antilopinae based on mitochondrial DNA sequences.</title>
        <authorList>
            <person name="Rebholz W.E.R."/>
            <person name="Harley E.H."/>
        </authorList>
    </citation>
    <scope>NUCLEOTIDE SEQUENCE [GENOMIC DNA]</scope>
    <source>
        <strain>Ssp. marica</strain>
        <strain>Ssp. subgutturosa</strain>
    </source>
</reference>
<protein>
    <recommendedName>
        <fullName>Cytochrome c oxidase subunit 3</fullName>
        <ecNumber>7.1.1.9</ecNumber>
    </recommendedName>
    <alternativeName>
        <fullName>Cytochrome c oxidase polypeptide III</fullName>
    </alternativeName>
</protein>
<comment type="function">
    <text evidence="2">Component of the cytochrome c oxidase, the last enzyme in the mitochondrial electron transport chain which drives oxidative phosphorylation. The respiratory chain contains 3 multisubunit complexes succinate dehydrogenase (complex II, CII), ubiquinol-cytochrome c oxidoreductase (cytochrome b-c1 complex, complex III, CIII) and cytochrome c oxidase (complex IV, CIV), that cooperate to transfer electrons derived from NADH and succinate to molecular oxygen, creating an electrochemical gradient over the inner membrane that drives transmembrane transport and the ATP synthase. Cytochrome c oxidase is the component of the respiratory chain that catalyzes the reduction of oxygen to water. Electrons originating from reduced cytochrome c in the intermembrane space (IMS) are transferred via the dinuclear copper A center (CU(A)) of subunit 2 and heme A of subunit 1 to the active site in subunit 1, a binuclear center (BNC) formed by heme A3 and copper B (CU(B)). The BNC reduces molecular oxygen to 2 water molecules using 4 electrons from cytochrome c in the IMS and 4 protons from the mitochondrial matrix.</text>
</comment>
<comment type="catalytic activity">
    <reaction evidence="2">
        <text>4 Fe(II)-[cytochrome c] + O2 + 8 H(+)(in) = 4 Fe(III)-[cytochrome c] + 2 H2O + 4 H(+)(out)</text>
        <dbReference type="Rhea" id="RHEA:11436"/>
        <dbReference type="Rhea" id="RHEA-COMP:10350"/>
        <dbReference type="Rhea" id="RHEA-COMP:14399"/>
        <dbReference type="ChEBI" id="CHEBI:15377"/>
        <dbReference type="ChEBI" id="CHEBI:15378"/>
        <dbReference type="ChEBI" id="CHEBI:15379"/>
        <dbReference type="ChEBI" id="CHEBI:29033"/>
        <dbReference type="ChEBI" id="CHEBI:29034"/>
        <dbReference type="EC" id="7.1.1.9"/>
    </reaction>
    <physiologicalReaction direction="left-to-right" evidence="2">
        <dbReference type="Rhea" id="RHEA:11437"/>
    </physiologicalReaction>
</comment>
<comment type="subunit">
    <text evidence="1">Component of the cytochrome c oxidase (complex IV, CIV), a multisubunit enzyme composed of 14 subunits. The complex is composed of a catalytic core of 3 subunits MT-CO1, MT-CO2 and MT-CO3, encoded in the mitochondrial DNA, and 11 supernumerary subunits COX4I, COX5A, COX5B, COX6A, COX6B, COX6C, COX7A, COX7B, COX7C, COX8 and NDUFA4, which are encoded in the nuclear genome. The complex exists as a monomer or a dimer and forms supercomplexes (SCs) in the inner mitochondrial membrane with NADH-ubiquinone oxidoreductase (complex I, CI) and ubiquinol-cytochrome c oxidoreductase (cytochrome b-c1 complex, complex III, CIII), resulting in different assemblies (supercomplex SCI(1)III(2)IV(1) and megacomplex MCI(2)III(2)IV(2)).</text>
</comment>
<comment type="subcellular location">
    <subcellularLocation>
        <location evidence="1">Mitochondrion inner membrane</location>
        <topology evidence="1">Multi-pass membrane protein</topology>
    </subcellularLocation>
</comment>
<comment type="similarity">
    <text evidence="3">Belongs to the cytochrome c oxidase subunit 3 family.</text>
</comment>
<accession>O48316</accession>
<proteinExistence type="inferred from homology"/>
<dbReference type="EC" id="7.1.1.9"/>
<dbReference type="EMBL" id="AF030477">
    <property type="protein sequence ID" value="AAB93616.1"/>
    <property type="molecule type" value="Genomic_DNA"/>
</dbReference>
<dbReference type="EMBL" id="AF030478">
    <property type="protein sequence ID" value="AAB93617.1"/>
    <property type="molecule type" value="Genomic_DNA"/>
</dbReference>
<dbReference type="SMR" id="O48316"/>
<dbReference type="GO" id="GO:0005743">
    <property type="term" value="C:mitochondrial inner membrane"/>
    <property type="evidence" value="ECO:0007669"/>
    <property type="project" value="UniProtKB-SubCell"/>
</dbReference>
<dbReference type="GO" id="GO:0045277">
    <property type="term" value="C:respiratory chain complex IV"/>
    <property type="evidence" value="ECO:0000250"/>
    <property type="project" value="UniProtKB"/>
</dbReference>
<dbReference type="GO" id="GO:0004129">
    <property type="term" value="F:cytochrome-c oxidase activity"/>
    <property type="evidence" value="ECO:0007669"/>
    <property type="project" value="UniProtKB-EC"/>
</dbReference>
<dbReference type="GO" id="GO:0006123">
    <property type="term" value="P:mitochondrial electron transport, cytochrome c to oxygen"/>
    <property type="evidence" value="ECO:0007669"/>
    <property type="project" value="TreeGrafter"/>
</dbReference>
<dbReference type="GO" id="GO:0008535">
    <property type="term" value="P:respiratory chain complex IV assembly"/>
    <property type="evidence" value="ECO:0000250"/>
    <property type="project" value="UniProtKB"/>
</dbReference>
<dbReference type="CDD" id="cd01665">
    <property type="entry name" value="Cyt_c_Oxidase_III"/>
    <property type="match status" value="1"/>
</dbReference>
<dbReference type="FunFam" id="1.10.287.70:FF:000048">
    <property type="entry name" value="Cytochrome c oxidase subunit 3"/>
    <property type="match status" value="1"/>
</dbReference>
<dbReference type="FunFam" id="1.20.120.80:FF:000002">
    <property type="entry name" value="Cytochrome c oxidase subunit 3"/>
    <property type="match status" value="1"/>
</dbReference>
<dbReference type="Gene3D" id="1.10.287.70">
    <property type="match status" value="1"/>
</dbReference>
<dbReference type="Gene3D" id="1.20.120.80">
    <property type="entry name" value="Cytochrome c oxidase, subunit III, four-helix bundle"/>
    <property type="match status" value="1"/>
</dbReference>
<dbReference type="InterPro" id="IPR024791">
    <property type="entry name" value="Cyt_c/ubiquinol_Oxase_su3"/>
</dbReference>
<dbReference type="InterPro" id="IPR033945">
    <property type="entry name" value="Cyt_c_oxase_su3_dom"/>
</dbReference>
<dbReference type="InterPro" id="IPR000298">
    <property type="entry name" value="Cyt_c_oxidase-like_su3"/>
</dbReference>
<dbReference type="InterPro" id="IPR035973">
    <property type="entry name" value="Cyt_c_oxidase_su3-like_sf"/>
</dbReference>
<dbReference type="InterPro" id="IPR013833">
    <property type="entry name" value="Cyt_c_oxidase_su3_a-hlx"/>
</dbReference>
<dbReference type="PANTHER" id="PTHR11403:SF7">
    <property type="entry name" value="CYTOCHROME C OXIDASE SUBUNIT 3"/>
    <property type="match status" value="1"/>
</dbReference>
<dbReference type="PANTHER" id="PTHR11403">
    <property type="entry name" value="CYTOCHROME C OXIDASE SUBUNIT III"/>
    <property type="match status" value="1"/>
</dbReference>
<dbReference type="Pfam" id="PF00510">
    <property type="entry name" value="COX3"/>
    <property type="match status" value="1"/>
</dbReference>
<dbReference type="SUPFAM" id="SSF81452">
    <property type="entry name" value="Cytochrome c oxidase subunit III-like"/>
    <property type="match status" value="1"/>
</dbReference>
<dbReference type="PROSITE" id="PS50253">
    <property type="entry name" value="COX3"/>
    <property type="match status" value="1"/>
</dbReference>